<reference key="1">
    <citation type="journal article" date="2010" name="Genome Biol. Evol.">
        <title>Continuing evolution of Burkholderia mallei through genome reduction and large-scale rearrangements.</title>
        <authorList>
            <person name="Losada L."/>
            <person name="Ronning C.M."/>
            <person name="DeShazer D."/>
            <person name="Woods D."/>
            <person name="Fedorova N."/>
            <person name="Kim H.S."/>
            <person name="Shabalina S.A."/>
            <person name="Pearson T.R."/>
            <person name="Brinkac L."/>
            <person name="Tan P."/>
            <person name="Nandi T."/>
            <person name="Crabtree J."/>
            <person name="Badger J."/>
            <person name="Beckstrom-Sternberg S."/>
            <person name="Saqib M."/>
            <person name="Schutzer S.E."/>
            <person name="Keim P."/>
            <person name="Nierman W.C."/>
        </authorList>
    </citation>
    <scope>NUCLEOTIDE SEQUENCE [LARGE SCALE GENOMIC DNA]</scope>
    <source>
        <strain>1710b</strain>
    </source>
</reference>
<proteinExistence type="inferred from homology"/>
<evidence type="ECO:0000255" key="1">
    <source>
        <dbReference type="HAMAP-Rule" id="MF_00038"/>
    </source>
</evidence>
<organism>
    <name type="scientific">Burkholderia pseudomallei (strain 1710b)</name>
    <dbReference type="NCBI Taxonomy" id="320372"/>
    <lineage>
        <taxon>Bacteria</taxon>
        <taxon>Pseudomonadati</taxon>
        <taxon>Pseudomonadota</taxon>
        <taxon>Betaproteobacteria</taxon>
        <taxon>Burkholderiales</taxon>
        <taxon>Burkholderiaceae</taxon>
        <taxon>Burkholderia</taxon>
        <taxon>pseudomallei group</taxon>
    </lineage>
</organism>
<sequence length="389" mass="42882">MLLALAQWLQGDASFLRLFTYLTFRAVMATITALVIGLVCGPWVIRKLTQMKVGQAVRKDGPQTHLVKSGTPTMGGVLILIGIAVATLLWGDLTNRFIWIVMLVTFGFGVIGWVDDYRKVVYKDPRGMSSREKYFWQSVIGLFAAVYLAFSVSEANNVRVFDLFMAWVRSGLSMGLPARADLMLPFLKSISYPLGVWGFIALTYFVIVGASNAVNLTDGLDGLVIMPVVLVGASLGVFAYVMGSAVYSKYLLFPHIPGAGELLIFCSAMGGAGLAFLWYNTHPAQVFMGDVGALALGGALGTVAVIVRQEIVLFIMGGIFVAETLSVMLQVTWFKYTKKRYGEGRRIFKMAPLHHHFELSGWKETQVVVRFWIITLMLCLFGLSTLKLR</sequence>
<keyword id="KW-0131">Cell cycle</keyword>
<keyword id="KW-0132">Cell division</keyword>
<keyword id="KW-0997">Cell inner membrane</keyword>
<keyword id="KW-1003">Cell membrane</keyword>
<keyword id="KW-0133">Cell shape</keyword>
<keyword id="KW-0961">Cell wall biogenesis/degradation</keyword>
<keyword id="KW-0460">Magnesium</keyword>
<keyword id="KW-0472">Membrane</keyword>
<keyword id="KW-0479">Metal-binding</keyword>
<keyword id="KW-0573">Peptidoglycan synthesis</keyword>
<keyword id="KW-0808">Transferase</keyword>
<keyword id="KW-0812">Transmembrane</keyword>
<keyword id="KW-1133">Transmembrane helix</keyword>
<comment type="function">
    <text evidence="1">Catalyzes the initial step of the lipid cycle reactions in the biosynthesis of the cell wall peptidoglycan: transfers peptidoglycan precursor phospho-MurNAc-pentapeptide from UDP-MurNAc-pentapeptide onto the lipid carrier undecaprenyl phosphate, yielding undecaprenyl-pyrophosphoryl-MurNAc-pentapeptide, known as lipid I.</text>
</comment>
<comment type="catalytic activity">
    <reaction evidence="1">
        <text>UDP-N-acetyl-alpha-D-muramoyl-L-alanyl-gamma-D-glutamyl-meso-2,6-diaminopimeloyl-D-alanyl-D-alanine + di-trans,octa-cis-undecaprenyl phosphate = di-trans,octa-cis-undecaprenyl diphospho-N-acetyl-alpha-D-muramoyl-L-alanyl-D-glutamyl-meso-2,6-diaminopimeloyl-D-alanyl-D-alanine + UMP</text>
        <dbReference type="Rhea" id="RHEA:28386"/>
        <dbReference type="ChEBI" id="CHEBI:57865"/>
        <dbReference type="ChEBI" id="CHEBI:60392"/>
        <dbReference type="ChEBI" id="CHEBI:61386"/>
        <dbReference type="ChEBI" id="CHEBI:61387"/>
        <dbReference type="EC" id="2.7.8.13"/>
    </reaction>
</comment>
<comment type="cofactor">
    <cofactor evidence="1">
        <name>Mg(2+)</name>
        <dbReference type="ChEBI" id="CHEBI:18420"/>
    </cofactor>
</comment>
<comment type="pathway">
    <text evidence="1">Cell wall biogenesis; peptidoglycan biosynthesis.</text>
</comment>
<comment type="subcellular location">
    <subcellularLocation>
        <location evidence="1">Cell inner membrane</location>
        <topology evidence="1">Multi-pass membrane protein</topology>
    </subcellularLocation>
</comment>
<comment type="similarity">
    <text evidence="1">Belongs to the glycosyltransferase 4 family. MraY subfamily.</text>
</comment>
<gene>
    <name evidence="1" type="primary">mraY</name>
    <name type="ordered locus">BURPS1710b_3548</name>
</gene>
<feature type="chain" id="PRO_0000235441" description="Phospho-N-acetylmuramoyl-pentapeptide-transferase">
    <location>
        <begin position="1"/>
        <end position="389"/>
    </location>
</feature>
<feature type="transmembrane region" description="Helical" evidence="1">
    <location>
        <begin position="25"/>
        <end position="45"/>
    </location>
</feature>
<feature type="transmembrane region" description="Helical" evidence="1">
    <location>
        <begin position="73"/>
        <end position="93"/>
    </location>
</feature>
<feature type="transmembrane region" description="Helical" evidence="1">
    <location>
        <begin position="97"/>
        <end position="117"/>
    </location>
</feature>
<feature type="transmembrane region" description="Helical" evidence="1">
    <location>
        <begin position="135"/>
        <end position="155"/>
    </location>
</feature>
<feature type="transmembrane region" description="Helical" evidence="1">
    <location>
        <begin position="190"/>
        <end position="210"/>
    </location>
</feature>
<feature type="transmembrane region" description="Helical" evidence="1">
    <location>
        <begin position="222"/>
        <end position="242"/>
    </location>
</feature>
<feature type="transmembrane region" description="Helical" evidence="1">
    <location>
        <begin position="258"/>
        <end position="278"/>
    </location>
</feature>
<feature type="transmembrane region" description="Helical" evidence="1">
    <location>
        <begin position="286"/>
        <end position="306"/>
    </location>
</feature>
<feature type="transmembrane region" description="Helical" evidence="1">
    <location>
        <begin position="311"/>
        <end position="331"/>
    </location>
</feature>
<feature type="transmembrane region" description="Helical" evidence="1">
    <location>
        <begin position="366"/>
        <end position="386"/>
    </location>
</feature>
<accession>Q3JND5</accession>
<name>MRAY_BURP1</name>
<dbReference type="EC" id="2.7.8.13" evidence="1"/>
<dbReference type="EMBL" id="CP000124">
    <property type="protein sequence ID" value="ABA50434.1"/>
    <property type="molecule type" value="Genomic_DNA"/>
</dbReference>
<dbReference type="RefSeq" id="WP_004194370.1">
    <property type="nucleotide sequence ID" value="NC_007434.1"/>
</dbReference>
<dbReference type="SMR" id="Q3JND5"/>
<dbReference type="EnsemblBacteria" id="ABA50434">
    <property type="protein sequence ID" value="ABA50434"/>
    <property type="gene ID" value="BURPS1710b_3548"/>
</dbReference>
<dbReference type="GeneID" id="92980246"/>
<dbReference type="KEGG" id="bpm:BURPS1710b_3548"/>
<dbReference type="HOGENOM" id="CLU_023982_0_0_4"/>
<dbReference type="UniPathway" id="UPA00219"/>
<dbReference type="Proteomes" id="UP000002700">
    <property type="component" value="Chromosome I"/>
</dbReference>
<dbReference type="GO" id="GO:0005886">
    <property type="term" value="C:plasma membrane"/>
    <property type="evidence" value="ECO:0007669"/>
    <property type="project" value="UniProtKB-SubCell"/>
</dbReference>
<dbReference type="GO" id="GO:0046872">
    <property type="term" value="F:metal ion binding"/>
    <property type="evidence" value="ECO:0007669"/>
    <property type="project" value="UniProtKB-KW"/>
</dbReference>
<dbReference type="GO" id="GO:0008963">
    <property type="term" value="F:phospho-N-acetylmuramoyl-pentapeptide-transferase activity"/>
    <property type="evidence" value="ECO:0007669"/>
    <property type="project" value="UniProtKB-UniRule"/>
</dbReference>
<dbReference type="GO" id="GO:0051992">
    <property type="term" value="F:UDP-N-acetylmuramoyl-L-alanyl-D-glutamyl-meso-2,6-diaminopimelyl-D-alanyl-D-alanine:undecaprenyl-phosphate transferase activity"/>
    <property type="evidence" value="ECO:0007669"/>
    <property type="project" value="RHEA"/>
</dbReference>
<dbReference type="GO" id="GO:0051301">
    <property type="term" value="P:cell division"/>
    <property type="evidence" value="ECO:0007669"/>
    <property type="project" value="UniProtKB-KW"/>
</dbReference>
<dbReference type="GO" id="GO:0071555">
    <property type="term" value="P:cell wall organization"/>
    <property type="evidence" value="ECO:0007669"/>
    <property type="project" value="UniProtKB-KW"/>
</dbReference>
<dbReference type="GO" id="GO:0009252">
    <property type="term" value="P:peptidoglycan biosynthetic process"/>
    <property type="evidence" value="ECO:0007669"/>
    <property type="project" value="UniProtKB-UniRule"/>
</dbReference>
<dbReference type="GO" id="GO:0008360">
    <property type="term" value="P:regulation of cell shape"/>
    <property type="evidence" value="ECO:0007669"/>
    <property type="project" value="UniProtKB-KW"/>
</dbReference>
<dbReference type="CDD" id="cd06852">
    <property type="entry name" value="GT_MraY"/>
    <property type="match status" value="1"/>
</dbReference>
<dbReference type="HAMAP" id="MF_00038">
    <property type="entry name" value="MraY"/>
    <property type="match status" value="1"/>
</dbReference>
<dbReference type="InterPro" id="IPR000715">
    <property type="entry name" value="Glycosyl_transferase_4"/>
</dbReference>
<dbReference type="InterPro" id="IPR003524">
    <property type="entry name" value="PNAcMuramoyl-5peptid_Trfase"/>
</dbReference>
<dbReference type="InterPro" id="IPR018480">
    <property type="entry name" value="PNAcMuramoyl-5peptid_Trfase_CS"/>
</dbReference>
<dbReference type="NCBIfam" id="TIGR00445">
    <property type="entry name" value="mraY"/>
    <property type="match status" value="1"/>
</dbReference>
<dbReference type="PANTHER" id="PTHR22926">
    <property type="entry name" value="PHOSPHO-N-ACETYLMURAMOYL-PENTAPEPTIDE-TRANSFERASE"/>
    <property type="match status" value="1"/>
</dbReference>
<dbReference type="PANTHER" id="PTHR22926:SF5">
    <property type="entry name" value="PHOSPHO-N-ACETYLMURAMOYL-PENTAPEPTIDE-TRANSFERASE HOMOLOG"/>
    <property type="match status" value="1"/>
</dbReference>
<dbReference type="Pfam" id="PF00953">
    <property type="entry name" value="Glycos_transf_4"/>
    <property type="match status" value="1"/>
</dbReference>
<dbReference type="Pfam" id="PF10555">
    <property type="entry name" value="MraY_sig1"/>
    <property type="match status" value="1"/>
</dbReference>
<dbReference type="PROSITE" id="PS01347">
    <property type="entry name" value="MRAY_1"/>
    <property type="match status" value="1"/>
</dbReference>
<dbReference type="PROSITE" id="PS01348">
    <property type="entry name" value="MRAY_2"/>
    <property type="match status" value="1"/>
</dbReference>
<protein>
    <recommendedName>
        <fullName evidence="1">Phospho-N-acetylmuramoyl-pentapeptide-transferase</fullName>
        <ecNumber evidence="1">2.7.8.13</ecNumber>
    </recommendedName>
    <alternativeName>
        <fullName evidence="1">UDP-MurNAc-pentapeptide phosphotransferase</fullName>
    </alternativeName>
</protein>